<sequence>MEPDGTYEPGFVGIRFCQECNNMLYPKEDKENRILLYACRNCDYQQEADNSCIYVNKITHEVDELTQIIADVSQDPTLPRTEDHPCQKCGHKEAVFFQSHSARAEDAMRLYYVCTAPHCGHRWTE</sequence>
<reference key="1">
    <citation type="journal article" date="2001" name="Cytogenet. Cell Genet.">
        <title>Molecular characterization and chromosome assignment of the porcine gene COX7A1 coding for the muscle specific cytochrome c oxidase subunit VIIa-M.</title>
        <authorList>
            <person name="Droegemueller C."/>
            <person name="Kuiper H."/>
            <person name="Voss-Nemitz R."/>
            <person name="Brenig B."/>
            <person name="Distl O."/>
            <person name="Leeb T."/>
        </authorList>
    </citation>
    <scope>NUCLEOTIDE SEQUENCE [GENOMIC DNA]</scope>
</reference>
<feature type="chain" id="PRO_0000121469" description="DNA-directed RNA polymerase II subunit RPB9">
    <location>
        <begin position="1"/>
        <end position="125"/>
    </location>
</feature>
<feature type="zinc finger region" description="C4-type" evidence="4">
    <location>
        <begin position="17"/>
        <end position="42"/>
    </location>
</feature>
<feature type="zinc finger region" description="TFIIS-type" evidence="5">
    <location>
        <begin position="82"/>
        <end position="124"/>
    </location>
</feature>
<feature type="binding site" evidence="6">
    <location>
        <position position="17"/>
    </location>
    <ligand>
        <name>Zn(2+)</name>
        <dbReference type="ChEBI" id="CHEBI:29105"/>
        <label>1</label>
    </ligand>
</feature>
<feature type="binding site" evidence="6">
    <location>
        <position position="20"/>
    </location>
    <ligand>
        <name>Zn(2+)</name>
        <dbReference type="ChEBI" id="CHEBI:29105"/>
        <label>1</label>
    </ligand>
</feature>
<feature type="binding site" evidence="6">
    <location>
        <position position="39"/>
    </location>
    <ligand>
        <name>Zn(2+)</name>
        <dbReference type="ChEBI" id="CHEBI:29105"/>
        <label>1</label>
    </ligand>
</feature>
<feature type="binding site" evidence="6">
    <location>
        <position position="42"/>
    </location>
    <ligand>
        <name>Zn(2+)</name>
        <dbReference type="ChEBI" id="CHEBI:29105"/>
        <label>1</label>
    </ligand>
</feature>
<feature type="binding site" evidence="5">
    <location>
        <position position="86"/>
    </location>
    <ligand>
        <name>Zn(2+)</name>
        <dbReference type="ChEBI" id="CHEBI:29105"/>
        <label>2</label>
    </ligand>
</feature>
<feature type="binding site" evidence="5">
    <location>
        <position position="89"/>
    </location>
    <ligand>
        <name>Zn(2+)</name>
        <dbReference type="ChEBI" id="CHEBI:29105"/>
        <label>2</label>
    </ligand>
</feature>
<feature type="binding site" evidence="5">
    <location>
        <position position="114"/>
    </location>
    <ligand>
        <name>Zn(2+)</name>
        <dbReference type="ChEBI" id="CHEBI:29105"/>
        <label>2</label>
    </ligand>
</feature>
<feature type="binding site" evidence="5">
    <location>
        <position position="119"/>
    </location>
    <ligand>
        <name>Zn(2+)</name>
        <dbReference type="ChEBI" id="CHEBI:29105"/>
        <label>2</label>
    </ligand>
</feature>
<feature type="modified residue" description="N-acetylmethionine" evidence="3">
    <location>
        <position position="1"/>
    </location>
</feature>
<feature type="turn" evidence="11">
    <location>
        <begin position="18"/>
        <end position="20"/>
    </location>
</feature>
<feature type="strand" evidence="11">
    <location>
        <begin position="25"/>
        <end position="28"/>
    </location>
</feature>
<feature type="turn" evidence="11">
    <location>
        <begin position="30"/>
        <end position="32"/>
    </location>
</feature>
<feature type="strand" evidence="11">
    <location>
        <begin position="35"/>
        <end position="38"/>
    </location>
</feature>
<feature type="strand" evidence="11">
    <location>
        <begin position="40"/>
        <end position="43"/>
    </location>
</feature>
<feature type="strand" evidence="11">
    <location>
        <begin position="45"/>
        <end position="47"/>
    </location>
</feature>
<feature type="strand" evidence="11">
    <location>
        <begin position="52"/>
        <end position="56"/>
    </location>
</feature>
<feature type="helix" evidence="11">
    <location>
        <begin position="64"/>
        <end position="67"/>
    </location>
</feature>
<feature type="helix" evidence="11">
    <location>
        <begin position="70"/>
        <end position="74"/>
    </location>
</feature>
<feature type="strand" evidence="10">
    <location>
        <begin position="76"/>
        <end position="78"/>
    </location>
</feature>
<feature type="strand" evidence="11">
    <location>
        <begin position="80"/>
        <end position="84"/>
    </location>
</feature>
<feature type="turn" evidence="11">
    <location>
        <begin position="87"/>
        <end position="89"/>
    </location>
</feature>
<feature type="strand" evidence="11">
    <location>
        <begin position="94"/>
        <end position="98"/>
    </location>
</feature>
<feature type="strand" evidence="11">
    <location>
        <begin position="101"/>
        <end position="103"/>
    </location>
</feature>
<feature type="strand" evidence="9">
    <location>
        <begin position="105"/>
        <end position="107"/>
    </location>
</feature>
<feature type="strand" evidence="11">
    <location>
        <begin position="110"/>
        <end position="114"/>
    </location>
</feature>
<feature type="turn" evidence="9">
    <location>
        <begin position="117"/>
        <end position="119"/>
    </location>
</feature>
<feature type="strand" evidence="8">
    <location>
        <begin position="122"/>
        <end position="124"/>
    </location>
</feature>
<comment type="function">
    <text evidence="1">DNA-dependent RNA polymerase catalyzes the transcription of DNA into RNA using the four ribonucleoside triphosphates as substrates. Component of RNA polymerase II which synthesizes mRNA precursors and many functional non-coding RNAs. Pol II is the central component of the basal RNA polymerase II transcription machinery. It is composed of mobile elements that move relative to each other. RPB9 is part of the upper jaw surrounding the central large cleft and thought to grab the incoming DNA template (By similarity).</text>
</comment>
<comment type="subunit">
    <text evidence="1">Component of the RNA polymerase II (Pol II) complex consisting of 12 subunits.</text>
</comment>
<comment type="subcellular location">
    <subcellularLocation>
        <location evidence="2">Nucleus</location>
        <location evidence="2">Nucleolus</location>
    </subcellularLocation>
</comment>
<comment type="similarity">
    <text evidence="7">Belongs to the archaeal RpoM/eukaryotic RPA12/RPB9/RPC11 RNA polymerase family.</text>
</comment>
<organism>
    <name type="scientific">Sus scrofa</name>
    <name type="common">Pig</name>
    <dbReference type="NCBI Taxonomy" id="9823"/>
    <lineage>
        <taxon>Eukaryota</taxon>
        <taxon>Metazoa</taxon>
        <taxon>Chordata</taxon>
        <taxon>Craniata</taxon>
        <taxon>Vertebrata</taxon>
        <taxon>Euteleostomi</taxon>
        <taxon>Mammalia</taxon>
        <taxon>Eutheria</taxon>
        <taxon>Laurasiatheria</taxon>
        <taxon>Artiodactyla</taxon>
        <taxon>Suina</taxon>
        <taxon>Suidae</taxon>
        <taxon>Sus</taxon>
    </lineage>
</organism>
<accession>P60899</accession>
<proteinExistence type="evidence at protein level"/>
<keyword id="KW-0002">3D-structure</keyword>
<keyword id="KW-0007">Acetylation</keyword>
<keyword id="KW-0240">DNA-directed RNA polymerase</keyword>
<keyword id="KW-0479">Metal-binding</keyword>
<keyword id="KW-0539">Nucleus</keyword>
<keyword id="KW-1185">Reference proteome</keyword>
<keyword id="KW-0804">Transcription</keyword>
<keyword id="KW-0862">Zinc</keyword>
<keyword id="KW-0863">Zinc-finger</keyword>
<dbReference type="EMBL" id="AJ410870">
    <property type="protein sequence ID" value="CAD56045.1"/>
    <property type="molecule type" value="Genomic_DNA"/>
</dbReference>
<dbReference type="RefSeq" id="NP_001192333.1">
    <property type="nucleotide sequence ID" value="NM_001205404.1"/>
</dbReference>
<dbReference type="PDB" id="6EXV">
    <property type="method" value="EM"/>
    <property type="resolution" value="3.60 A"/>
    <property type="chains" value="I=1-125"/>
</dbReference>
<dbReference type="PDB" id="6GMH">
    <property type="method" value="EM"/>
    <property type="resolution" value="3.10 A"/>
    <property type="chains" value="I=1-125"/>
</dbReference>
<dbReference type="PDB" id="6GML">
    <property type="method" value="EM"/>
    <property type="resolution" value="3.20 A"/>
    <property type="chains" value="I=1-125"/>
</dbReference>
<dbReference type="PDB" id="6TED">
    <property type="method" value="EM"/>
    <property type="resolution" value="3.10 A"/>
    <property type="chains" value="I=1-125"/>
</dbReference>
<dbReference type="PDB" id="7B0Y">
    <property type="method" value="EM"/>
    <property type="resolution" value="3.60 A"/>
    <property type="chains" value="I=1-125"/>
</dbReference>
<dbReference type="PDB" id="7B7U">
    <property type="method" value="EM"/>
    <property type="resolution" value="2.80 A"/>
    <property type="chains" value="I=1-125"/>
</dbReference>
<dbReference type="PDB" id="7EDX">
    <property type="method" value="EM"/>
    <property type="resolution" value="4.50 A"/>
    <property type="chains" value="w=1-125"/>
</dbReference>
<dbReference type="PDB" id="7EG7">
    <property type="method" value="EM"/>
    <property type="resolution" value="6.20 A"/>
    <property type="chains" value="w=1-125"/>
</dbReference>
<dbReference type="PDB" id="7EG8">
    <property type="method" value="EM"/>
    <property type="resolution" value="7.40 A"/>
    <property type="chains" value="w=1-125"/>
</dbReference>
<dbReference type="PDB" id="7EG9">
    <property type="method" value="EM"/>
    <property type="resolution" value="3.70 A"/>
    <property type="chains" value="w=1-125"/>
</dbReference>
<dbReference type="PDB" id="7EGA">
    <property type="method" value="EM"/>
    <property type="resolution" value="4.10 A"/>
    <property type="chains" value="w=1-125"/>
</dbReference>
<dbReference type="PDB" id="7EGB">
    <property type="method" value="EM"/>
    <property type="resolution" value="3.30 A"/>
    <property type="chains" value="w=1-125"/>
</dbReference>
<dbReference type="PDB" id="7EGC">
    <property type="method" value="EM"/>
    <property type="resolution" value="3.90 A"/>
    <property type="chains" value="w=1-125"/>
</dbReference>
<dbReference type="PDB" id="7ENA">
    <property type="method" value="EM"/>
    <property type="resolution" value="4.07 A"/>
    <property type="chains" value="PI=1-125"/>
</dbReference>
<dbReference type="PDB" id="7ENC">
    <property type="method" value="EM"/>
    <property type="resolution" value="4.13 A"/>
    <property type="chains" value="PI=1-125"/>
</dbReference>
<dbReference type="PDB" id="7F4G">
    <property type="method" value="EM"/>
    <property type="resolution" value="2.78 A"/>
    <property type="chains" value="I=1-125"/>
</dbReference>
<dbReference type="PDB" id="7NVR">
    <property type="method" value="EM"/>
    <property type="resolution" value="4.50 A"/>
    <property type="chains" value="I=1-125"/>
</dbReference>
<dbReference type="PDB" id="7NVS">
    <property type="method" value="EM"/>
    <property type="resolution" value="2.80 A"/>
    <property type="chains" value="I=1-125"/>
</dbReference>
<dbReference type="PDB" id="7NVT">
    <property type="method" value="EM"/>
    <property type="resolution" value="2.90 A"/>
    <property type="chains" value="I=1-125"/>
</dbReference>
<dbReference type="PDB" id="7NVU">
    <property type="method" value="EM"/>
    <property type="resolution" value="2.50 A"/>
    <property type="chains" value="I=1-125"/>
</dbReference>
<dbReference type="PDB" id="7NVY">
    <property type="method" value="EM"/>
    <property type="resolution" value="7.30 A"/>
    <property type="chains" value="I=1-125"/>
</dbReference>
<dbReference type="PDB" id="7NVZ">
    <property type="method" value="EM"/>
    <property type="resolution" value="7.20 A"/>
    <property type="chains" value="I=1-125"/>
</dbReference>
<dbReference type="PDB" id="7NW0">
    <property type="method" value="EM"/>
    <property type="resolution" value="6.60 A"/>
    <property type="chains" value="I=1-125"/>
</dbReference>
<dbReference type="PDB" id="7OKX">
    <property type="method" value="EM"/>
    <property type="resolution" value="3.30 A"/>
    <property type="chains" value="I=1-125"/>
</dbReference>
<dbReference type="PDB" id="7OKY">
    <property type="method" value="EM"/>
    <property type="resolution" value="4.14 A"/>
    <property type="chains" value="I=1-125"/>
</dbReference>
<dbReference type="PDB" id="7OL0">
    <property type="method" value="EM"/>
    <property type="resolution" value="3.00 A"/>
    <property type="chains" value="I=1-125"/>
</dbReference>
<dbReference type="PDB" id="7OO3">
    <property type="method" value="EM"/>
    <property type="resolution" value="2.80 A"/>
    <property type="chains" value="I=1-125"/>
</dbReference>
<dbReference type="PDB" id="7OOB">
    <property type="method" value="EM"/>
    <property type="resolution" value="2.70 A"/>
    <property type="chains" value="I=1-125"/>
</dbReference>
<dbReference type="PDB" id="7OOP">
    <property type="method" value="EM"/>
    <property type="resolution" value="2.90 A"/>
    <property type="chains" value="I=1-125"/>
</dbReference>
<dbReference type="PDB" id="7OPC">
    <property type="method" value="EM"/>
    <property type="resolution" value="3.00 A"/>
    <property type="chains" value="I=1-125"/>
</dbReference>
<dbReference type="PDB" id="7OPD">
    <property type="method" value="EM"/>
    <property type="resolution" value="3.00 A"/>
    <property type="chains" value="I=1-125"/>
</dbReference>
<dbReference type="PDB" id="7OZN">
    <property type="method" value="EM"/>
    <property type="resolution" value="3.50 A"/>
    <property type="chains" value="I/U=1-125"/>
</dbReference>
<dbReference type="PDB" id="7OZO">
    <property type="method" value="EM"/>
    <property type="resolution" value="3.80 A"/>
    <property type="chains" value="I/U=1-125"/>
</dbReference>
<dbReference type="PDB" id="7OZP">
    <property type="method" value="EM"/>
    <property type="resolution" value="3.80 A"/>
    <property type="chains" value="I/U=1-125"/>
</dbReference>
<dbReference type="PDB" id="7PKS">
    <property type="method" value="EM"/>
    <property type="resolution" value="3.60 A"/>
    <property type="chains" value="I=1-125"/>
</dbReference>
<dbReference type="PDB" id="7YCX">
    <property type="method" value="EM"/>
    <property type="resolution" value="4.18 A"/>
    <property type="chains" value="7=1-125"/>
</dbReference>
<dbReference type="PDB" id="7ZWD">
    <property type="method" value="EM"/>
    <property type="resolution" value="3.00 A"/>
    <property type="chains" value="I=1-125"/>
</dbReference>
<dbReference type="PDB" id="7ZX7">
    <property type="method" value="EM"/>
    <property type="resolution" value="3.40 A"/>
    <property type="chains" value="I=1-125"/>
</dbReference>
<dbReference type="PDB" id="7ZX8">
    <property type="method" value="EM"/>
    <property type="resolution" value="3.00 A"/>
    <property type="chains" value="I=1-125"/>
</dbReference>
<dbReference type="PDB" id="8A3Y">
    <property type="method" value="EM"/>
    <property type="resolution" value="3.30 A"/>
    <property type="chains" value="I=1-125"/>
</dbReference>
<dbReference type="PDB" id="8A40">
    <property type="method" value="EM"/>
    <property type="resolution" value="3.00 A"/>
    <property type="chains" value="I=1-125"/>
</dbReference>
<dbReference type="PDB" id="8B3D">
    <property type="method" value="EM"/>
    <property type="resolution" value="2.60 A"/>
    <property type="chains" value="I=1-125"/>
</dbReference>
<dbReference type="PDB" id="8B3F">
    <property type="method" value="EM"/>
    <property type="resolution" value="3.10 A"/>
    <property type="chains" value="I=1-125"/>
</dbReference>
<dbReference type="PDB" id="8BVW">
    <property type="method" value="EM"/>
    <property type="resolution" value="4.00 A"/>
    <property type="chains" value="I=1-125"/>
</dbReference>
<dbReference type="PDB" id="8BYQ">
    <property type="method" value="EM"/>
    <property type="resolution" value="4.10 A"/>
    <property type="chains" value="I=1-125"/>
</dbReference>
<dbReference type="PDB" id="8BZ1">
    <property type="method" value="EM"/>
    <property type="resolution" value="3.80 A"/>
    <property type="chains" value="I=1-125"/>
</dbReference>
<dbReference type="PDB" id="8GXQ">
    <property type="method" value="EM"/>
    <property type="resolution" value="5.04 A"/>
    <property type="chains" value="PI=1-125"/>
</dbReference>
<dbReference type="PDB" id="8GXS">
    <property type="method" value="EM"/>
    <property type="resolution" value="4.16 A"/>
    <property type="chains" value="PI=1-125"/>
</dbReference>
<dbReference type="PDB" id="8OEU">
    <property type="method" value="EM"/>
    <property type="resolution" value="3.04 A"/>
    <property type="chains" value="I=1-125"/>
</dbReference>
<dbReference type="PDB" id="8OEV">
    <property type="method" value="EM"/>
    <property type="resolution" value="2.86 A"/>
    <property type="chains" value="I=1-125"/>
</dbReference>
<dbReference type="PDB" id="8OEW">
    <property type="method" value="EM"/>
    <property type="resolution" value="2.80 A"/>
    <property type="chains" value="I=1-125"/>
</dbReference>
<dbReference type="PDB" id="8OF0">
    <property type="method" value="EM"/>
    <property type="resolution" value="3.05 A"/>
    <property type="chains" value="I=1-125"/>
</dbReference>
<dbReference type="PDB" id="8P4A">
    <property type="method" value="EM"/>
    <property type="resolution" value="3.60 A"/>
    <property type="chains" value="I=1-125"/>
</dbReference>
<dbReference type="PDB" id="8P4B">
    <property type="method" value="EM"/>
    <property type="resolution" value="3.20 A"/>
    <property type="chains" value="I=1-125"/>
</dbReference>
<dbReference type="PDB" id="8P4C">
    <property type="method" value="EM"/>
    <property type="resolution" value="3.80 A"/>
    <property type="chains" value="I=1-125"/>
</dbReference>
<dbReference type="PDB" id="8P4D">
    <property type="method" value="EM"/>
    <property type="resolution" value="3.60 A"/>
    <property type="chains" value="I=1-125"/>
</dbReference>
<dbReference type="PDB" id="8P4E">
    <property type="method" value="EM"/>
    <property type="resolution" value="3.90 A"/>
    <property type="chains" value="I=1-125"/>
</dbReference>
<dbReference type="PDB" id="8P4F">
    <property type="method" value="EM"/>
    <property type="resolution" value="4.00 A"/>
    <property type="chains" value="I=1-125"/>
</dbReference>
<dbReference type="PDB" id="8QEP">
    <property type="method" value="EM"/>
    <property type="resolution" value="2.50 A"/>
    <property type="chains" value="I=1-125"/>
</dbReference>
<dbReference type="PDB" id="8QEQ">
    <property type="method" value="EM"/>
    <property type="resolution" value="3.10 A"/>
    <property type="chains" value="I=1-125"/>
</dbReference>
<dbReference type="PDB" id="8RBX">
    <property type="method" value="EM"/>
    <property type="resolution" value="4.10 A"/>
    <property type="chains" value="I=1-125"/>
</dbReference>
<dbReference type="PDB" id="8S51">
    <property type="method" value="EM"/>
    <property type="resolution" value="3.10 A"/>
    <property type="chains" value="I=1-125"/>
</dbReference>
<dbReference type="PDB" id="8S52">
    <property type="method" value="EM"/>
    <property type="resolution" value="2.90 A"/>
    <property type="chains" value="I=1-125"/>
</dbReference>
<dbReference type="PDB" id="8S54">
    <property type="method" value="EM"/>
    <property type="resolution" value="3.40 A"/>
    <property type="chains" value="I=1-125"/>
</dbReference>
<dbReference type="PDB" id="8S55">
    <property type="method" value="EM"/>
    <property type="resolution" value="3.40 A"/>
    <property type="chains" value="I=1-125"/>
</dbReference>
<dbReference type="PDB" id="8S5N">
    <property type="method" value="EM"/>
    <property type="resolution" value="3.40 A"/>
    <property type="chains" value="I=1-125"/>
</dbReference>
<dbReference type="PDB" id="8UHA">
    <property type="method" value="EM"/>
    <property type="resolution" value="3.50 A"/>
    <property type="chains" value="I=1-125"/>
</dbReference>
<dbReference type="PDB" id="8UHD">
    <property type="method" value="EM"/>
    <property type="resolution" value="2.80 A"/>
    <property type="chains" value="I=1-125"/>
</dbReference>
<dbReference type="PDB" id="8UHG">
    <property type="method" value="EM"/>
    <property type="resolution" value="2.70 A"/>
    <property type="chains" value="I=1-125"/>
</dbReference>
<dbReference type="PDB" id="8UI0">
    <property type="method" value="EM"/>
    <property type="resolution" value="2.70 A"/>
    <property type="chains" value="I=1-125"/>
</dbReference>
<dbReference type="PDB" id="8UIS">
    <property type="method" value="EM"/>
    <property type="resolution" value="3.23 A"/>
    <property type="chains" value="I=1-125"/>
</dbReference>
<dbReference type="PDB" id="8W8E">
    <property type="method" value="EM"/>
    <property type="resolution" value="3.90 A"/>
    <property type="chains" value="I=1-125"/>
</dbReference>
<dbReference type="PDB" id="8W8F">
    <property type="method" value="EM"/>
    <property type="resolution" value="4.00 A"/>
    <property type="chains" value="I=1-125"/>
</dbReference>
<dbReference type="PDB" id="8WAK">
    <property type="method" value="EM"/>
    <property type="resolution" value="5.47 A"/>
    <property type="chains" value="w=1-125"/>
</dbReference>
<dbReference type="PDB" id="8WAL">
    <property type="method" value="EM"/>
    <property type="resolution" value="8.52 A"/>
    <property type="chains" value="w=1-125"/>
</dbReference>
<dbReference type="PDB" id="8WAN">
    <property type="method" value="EM"/>
    <property type="resolution" value="6.07 A"/>
    <property type="chains" value="w=1-125"/>
</dbReference>
<dbReference type="PDB" id="8WAO">
    <property type="method" value="EM"/>
    <property type="resolution" value="6.40 A"/>
    <property type="chains" value="w=1-125"/>
</dbReference>
<dbReference type="PDB" id="8WAP">
    <property type="method" value="EM"/>
    <property type="resolution" value="5.85 A"/>
    <property type="chains" value="w=1-125"/>
</dbReference>
<dbReference type="PDB" id="8WAQ">
    <property type="method" value="EM"/>
    <property type="resolution" value="6.29 A"/>
    <property type="chains" value="w=1-125"/>
</dbReference>
<dbReference type="PDB" id="8WAR">
    <property type="method" value="EM"/>
    <property type="resolution" value="7.20 A"/>
    <property type="chains" value="w=1-125"/>
</dbReference>
<dbReference type="PDB" id="8WAS">
    <property type="method" value="EM"/>
    <property type="resolution" value="6.13 A"/>
    <property type="chains" value="w=1-125"/>
</dbReference>
<dbReference type="PDB" id="8WAT">
    <property type="method" value="EM"/>
    <property type="resolution" value="2.82 A"/>
    <property type="chains" value="w=1-125"/>
</dbReference>
<dbReference type="PDB" id="8WAU">
    <property type="method" value="EM"/>
    <property type="resolution" value="2.78 A"/>
    <property type="chains" value="w=1-125"/>
</dbReference>
<dbReference type="PDB" id="8WAV">
    <property type="method" value="EM"/>
    <property type="resolution" value="2.72 A"/>
    <property type="chains" value="w=1-125"/>
</dbReference>
<dbReference type="PDB" id="8WAW">
    <property type="method" value="EM"/>
    <property type="resolution" value="3.02 A"/>
    <property type="chains" value="w=1-125"/>
</dbReference>
<dbReference type="PDB" id="8WAX">
    <property type="method" value="EM"/>
    <property type="resolution" value="2.75 A"/>
    <property type="chains" value="w=1-125"/>
</dbReference>
<dbReference type="PDB" id="8WAY">
    <property type="method" value="EM"/>
    <property type="resolution" value="2.85 A"/>
    <property type="chains" value="w=1-125"/>
</dbReference>
<dbReference type="PDB" id="8WAZ">
    <property type="method" value="EM"/>
    <property type="resolution" value="2.76 A"/>
    <property type="chains" value="w=1-125"/>
</dbReference>
<dbReference type="PDB" id="8WB0">
    <property type="method" value="EM"/>
    <property type="resolution" value="2.94 A"/>
    <property type="chains" value="w=1-125"/>
</dbReference>
<dbReference type="PDB" id="9BZ0">
    <property type="method" value="EM"/>
    <property type="resolution" value="1.90 A"/>
    <property type="chains" value="I=1-125"/>
</dbReference>
<dbReference type="PDB" id="9EGX">
    <property type="method" value="EM"/>
    <property type="resolution" value="2.90 A"/>
    <property type="chains" value="I=1-125"/>
</dbReference>
<dbReference type="PDB" id="9EGY">
    <property type="method" value="EM"/>
    <property type="resolution" value="2.90 A"/>
    <property type="chains" value="I=1-125"/>
</dbReference>
<dbReference type="PDB" id="9EGZ">
    <property type="method" value="EM"/>
    <property type="resolution" value="2.90 A"/>
    <property type="chains" value="I=1-125"/>
</dbReference>
<dbReference type="PDB" id="9EH0">
    <property type="method" value="EM"/>
    <property type="resolution" value="3.60 A"/>
    <property type="chains" value="I=1-125"/>
</dbReference>
<dbReference type="PDB" id="9EH1">
    <property type="method" value="EM"/>
    <property type="resolution" value="3.10 A"/>
    <property type="chains" value="I=10-125"/>
</dbReference>
<dbReference type="PDB" id="9EH2">
    <property type="method" value="EM"/>
    <property type="resolution" value="3.10 A"/>
    <property type="chains" value="I=1-125"/>
</dbReference>
<dbReference type="PDB" id="9ER2">
    <property type="method" value="EM"/>
    <property type="resolution" value="3.30 A"/>
    <property type="chains" value="I=1-125"/>
</dbReference>
<dbReference type="PDB" id="9FD2">
    <property type="method" value="EM"/>
    <property type="resolution" value="3.40 A"/>
    <property type="chains" value="I=1-125"/>
</dbReference>
<dbReference type="PDB" id="9J0N">
    <property type="method" value="EM"/>
    <property type="resolution" value="3.40 A"/>
    <property type="chains" value="I=1-125"/>
</dbReference>
<dbReference type="PDB" id="9J0O">
    <property type="method" value="EM"/>
    <property type="resolution" value="3.30 A"/>
    <property type="chains" value="I=1-125"/>
</dbReference>
<dbReference type="PDB" id="9J0P">
    <property type="method" value="EM"/>
    <property type="resolution" value="3.30 A"/>
    <property type="chains" value="I=1-125"/>
</dbReference>
<dbReference type="PDBsum" id="6EXV"/>
<dbReference type="PDBsum" id="6GMH"/>
<dbReference type="PDBsum" id="6GML"/>
<dbReference type="PDBsum" id="6TED"/>
<dbReference type="PDBsum" id="7B0Y"/>
<dbReference type="PDBsum" id="7B7U"/>
<dbReference type="PDBsum" id="7EDX"/>
<dbReference type="PDBsum" id="7EG7"/>
<dbReference type="PDBsum" id="7EG8"/>
<dbReference type="PDBsum" id="7EG9"/>
<dbReference type="PDBsum" id="7EGA"/>
<dbReference type="PDBsum" id="7EGB"/>
<dbReference type="PDBsum" id="7EGC"/>
<dbReference type="PDBsum" id="7ENA"/>
<dbReference type="PDBsum" id="7ENC"/>
<dbReference type="PDBsum" id="7F4G"/>
<dbReference type="PDBsum" id="7NVR"/>
<dbReference type="PDBsum" id="7NVS"/>
<dbReference type="PDBsum" id="7NVT"/>
<dbReference type="PDBsum" id="7NVU"/>
<dbReference type="PDBsum" id="7NVY"/>
<dbReference type="PDBsum" id="7NVZ"/>
<dbReference type="PDBsum" id="7NW0"/>
<dbReference type="PDBsum" id="7OKX"/>
<dbReference type="PDBsum" id="7OKY"/>
<dbReference type="PDBsum" id="7OL0"/>
<dbReference type="PDBsum" id="7OO3"/>
<dbReference type="PDBsum" id="7OOB"/>
<dbReference type="PDBsum" id="7OOP"/>
<dbReference type="PDBsum" id="7OPC"/>
<dbReference type="PDBsum" id="7OPD"/>
<dbReference type="PDBsum" id="7OZN"/>
<dbReference type="PDBsum" id="7OZO"/>
<dbReference type="PDBsum" id="7OZP"/>
<dbReference type="PDBsum" id="7PKS"/>
<dbReference type="PDBsum" id="7YCX"/>
<dbReference type="PDBsum" id="7ZWD"/>
<dbReference type="PDBsum" id="7ZX7"/>
<dbReference type="PDBsum" id="7ZX8"/>
<dbReference type="PDBsum" id="8A3Y"/>
<dbReference type="PDBsum" id="8A40"/>
<dbReference type="PDBsum" id="8B3D"/>
<dbReference type="PDBsum" id="8B3F"/>
<dbReference type="PDBsum" id="8BVW"/>
<dbReference type="PDBsum" id="8BYQ"/>
<dbReference type="PDBsum" id="8BZ1"/>
<dbReference type="PDBsum" id="8GXQ"/>
<dbReference type="PDBsum" id="8GXS"/>
<dbReference type="PDBsum" id="8OEU"/>
<dbReference type="PDBsum" id="8OEV"/>
<dbReference type="PDBsum" id="8OEW"/>
<dbReference type="PDBsum" id="8OF0"/>
<dbReference type="PDBsum" id="8P4A"/>
<dbReference type="PDBsum" id="8P4B"/>
<dbReference type="PDBsum" id="8P4C"/>
<dbReference type="PDBsum" id="8P4D"/>
<dbReference type="PDBsum" id="8P4E"/>
<dbReference type="PDBsum" id="8P4F"/>
<dbReference type="PDBsum" id="8QEP"/>
<dbReference type="PDBsum" id="8QEQ"/>
<dbReference type="PDBsum" id="8RBX"/>
<dbReference type="PDBsum" id="8S51"/>
<dbReference type="PDBsum" id="8S52"/>
<dbReference type="PDBsum" id="8S54"/>
<dbReference type="PDBsum" id="8S55"/>
<dbReference type="PDBsum" id="8S5N"/>
<dbReference type="PDBsum" id="8UHA"/>
<dbReference type="PDBsum" id="8UHD"/>
<dbReference type="PDBsum" id="8UHG"/>
<dbReference type="PDBsum" id="8UI0"/>
<dbReference type="PDBsum" id="8UIS"/>
<dbReference type="PDBsum" id="8W8E"/>
<dbReference type="PDBsum" id="8W8F"/>
<dbReference type="PDBsum" id="8WAK"/>
<dbReference type="PDBsum" id="8WAL"/>
<dbReference type="PDBsum" id="8WAN"/>
<dbReference type="PDBsum" id="8WAO"/>
<dbReference type="PDBsum" id="8WAP"/>
<dbReference type="PDBsum" id="8WAQ"/>
<dbReference type="PDBsum" id="8WAR"/>
<dbReference type="PDBsum" id="8WAS"/>
<dbReference type="PDBsum" id="8WAT"/>
<dbReference type="PDBsum" id="8WAU"/>
<dbReference type="PDBsum" id="8WAV"/>
<dbReference type="PDBsum" id="8WAW"/>
<dbReference type="PDBsum" id="8WAX"/>
<dbReference type="PDBsum" id="8WAY"/>
<dbReference type="PDBsum" id="8WAZ"/>
<dbReference type="PDBsum" id="8WB0"/>
<dbReference type="PDBsum" id="9BZ0"/>
<dbReference type="PDBsum" id="9EGX"/>
<dbReference type="PDBsum" id="9EGY"/>
<dbReference type="PDBsum" id="9EGZ"/>
<dbReference type="PDBsum" id="9EH0"/>
<dbReference type="PDBsum" id="9EH1"/>
<dbReference type="PDBsum" id="9EH2"/>
<dbReference type="PDBsum" id="9ER2"/>
<dbReference type="PDBsum" id="9FD2"/>
<dbReference type="PDBsum" id="9J0N"/>
<dbReference type="PDBsum" id="9J0O"/>
<dbReference type="PDBsum" id="9J0P"/>
<dbReference type="EMDB" id="EMD-0031"/>
<dbReference type="EMDB" id="EMD-0038"/>
<dbReference type="EMDB" id="EMD-10480"/>
<dbReference type="EMDB" id="EMD-11972"/>
<dbReference type="EMDB" id="EMD-12087"/>
<dbReference type="EMDB" id="EMD-12610"/>
<dbReference type="EMDB" id="EMD-12611"/>
<dbReference type="EMDB" id="EMD-12612"/>
<dbReference type="EMDB" id="EMD-12613"/>
<dbReference type="EMDB" id="EMD-12617"/>
<dbReference type="EMDB" id="EMD-12618"/>
<dbReference type="EMDB" id="EMD-12619"/>
<dbReference type="EMDB" id="EMD-12966"/>
<dbReference type="EMDB" id="EMD-12967"/>
<dbReference type="EMDB" id="EMD-12968"/>
<dbReference type="EMDB" id="EMD-12969"/>
<dbReference type="EMDB" id="EMD-12970"/>
<dbReference type="EMDB" id="EMD-12971"/>
<dbReference type="EMDB" id="EMD-12972"/>
<dbReference type="EMDB" id="EMD-12973"/>
<dbReference type="EMDB" id="EMD-12974"/>
<dbReference type="EMDB" id="EMD-13004"/>
<dbReference type="EMDB" id="EMD-13009"/>
<dbReference type="EMDB" id="EMD-13010"/>
<dbReference type="EMDB" id="EMD-13015"/>
<dbReference type="EMDB" id="EMD-13016"/>
<dbReference type="EMDB" id="EMD-13129"/>
<dbReference type="EMDB" id="EMD-13130"/>
<dbReference type="EMDB" id="EMD-13131"/>
<dbReference type="EMDB" id="EMD-13479"/>
<dbReference type="EMDB" id="EMD-14997"/>
<dbReference type="EMDB" id="EMD-15006"/>
<dbReference type="EMDB" id="EMD-15007"/>
<dbReference type="EMDB" id="EMD-15127"/>
<dbReference type="EMDB" id="EMD-15129"/>
<dbReference type="EMDB" id="EMD-15825"/>
<dbReference type="EMDB" id="EMD-15826"/>
<dbReference type="EMDB" id="EMD-16274"/>
<dbReference type="EMDB" id="EMD-16331"/>
<dbReference type="EMDB" id="EMD-16335"/>
<dbReference type="EMDB" id="EMD-16828"/>
<dbReference type="EMDB" id="EMD-16832"/>
<dbReference type="EMDB" id="EMD-16833"/>
<dbReference type="EMDB" id="EMD-16835"/>
<dbReference type="EMDB" id="EMD-16837"/>
<dbReference type="EMDB" id="EMD-16838"/>
<dbReference type="EMDB" id="EMD-16840"/>
<dbReference type="EMDB" id="EMD-17403"/>
<dbReference type="EMDB" id="EMD-17404"/>
<dbReference type="EMDB" id="EMD-17405"/>
<dbReference type="EMDB" id="EMD-17406"/>
<dbReference type="EMDB" id="EMD-17407"/>
<dbReference type="EMDB" id="EMD-17408"/>
<dbReference type="EMDB" id="EMD-18367"/>
<dbReference type="EMDB" id="EMD-18371"/>
<dbReference type="EMDB" id="EMD-18375"/>
<dbReference type="EMDB" id="EMD-18376"/>
<dbReference type="EMDB" id="EMD-19038"/>
<dbReference type="EMDB" id="EMD-19718"/>
<dbReference type="EMDB" id="EMD-19719"/>
<dbReference type="EMDB" id="EMD-19720"/>
<dbReference type="EMDB" id="EMD-19726"/>
<dbReference type="EMDB" id="EMD-19743"/>
<dbReference type="EMDB" id="EMD-19909"/>
<dbReference type="EMDB" id="EMD-26620"/>
<dbReference type="EMDB" id="EMD-26621"/>
<dbReference type="EMDB" id="EMD-31075"/>
<dbReference type="EMDB" id="EMD-31107"/>
<dbReference type="EMDB" id="EMD-31108"/>
<dbReference type="EMDB" id="EMD-31109"/>
<dbReference type="EMDB" id="EMD-31110"/>
<dbReference type="EMDB" id="EMD-31111"/>
<dbReference type="EMDB" id="EMD-31112"/>
<dbReference type="EMDB" id="EMD-31204"/>
<dbReference type="EMDB" id="EMD-31207"/>
<dbReference type="EMDB" id="EMD-31450"/>
<dbReference type="EMDB" id="EMD-33741"/>
<dbReference type="EMDB" id="EMD-34359"/>
<dbReference type="EMDB" id="EMD-34360"/>
<dbReference type="EMDB" id="EMD-37352"/>
<dbReference type="EMDB" id="EMD-37353"/>
<dbReference type="EMDB" id="EMD-37395"/>
<dbReference type="EMDB" id="EMD-37396"/>
<dbReference type="EMDB" id="EMD-37398"/>
<dbReference type="EMDB" id="EMD-37399"/>
<dbReference type="EMDB" id="EMD-37400"/>
<dbReference type="EMDB" id="EMD-37401"/>
<dbReference type="EMDB" id="EMD-37402"/>
<dbReference type="EMDB" id="EMD-37403"/>
<dbReference type="EMDB" id="EMD-37404"/>
<dbReference type="EMDB" id="EMD-37405"/>
<dbReference type="EMDB" id="EMD-37406"/>
<dbReference type="EMDB" id="EMD-37407"/>
<dbReference type="EMDB" id="EMD-37408"/>
<dbReference type="EMDB" id="EMD-37409"/>
<dbReference type="EMDB" id="EMD-37410"/>
<dbReference type="EMDB" id="EMD-37411"/>
<dbReference type="EMDB" id="EMD-3981"/>
<dbReference type="EMDB" id="EMD-42267"/>
<dbReference type="EMDB" id="EMD-42270"/>
<dbReference type="EMDB" id="EMD-42280"/>
<dbReference type="EMDB" id="EMD-42285"/>
<dbReference type="EMDB" id="EMD-42303"/>
<dbReference type="EMDB" id="EMD-42304"/>
<dbReference type="EMDB" id="EMD-45050"/>
<dbReference type="EMDB" id="EMD-48039"/>
<dbReference type="EMDB" id="EMD-48040"/>
<dbReference type="EMDB" id="EMD-48041"/>
<dbReference type="EMDB" id="EMD-48042"/>
<dbReference type="EMDB" id="EMD-48043"/>
<dbReference type="EMDB" id="EMD-48044"/>
<dbReference type="EMDB" id="EMD-50292"/>
<dbReference type="EMDB" id="EMD-50294"/>
<dbReference type="EMDB" id="EMD-50325"/>
<dbReference type="EMDB" id="EMD-61058"/>
<dbReference type="EMDB" id="EMD-61059"/>
<dbReference type="EMDB" id="EMD-61060"/>
<dbReference type="SMR" id="P60899"/>
<dbReference type="FunCoup" id="P60899">
    <property type="interactions" value="651"/>
</dbReference>
<dbReference type="STRING" id="9823.ENSSSCP00000042610"/>
<dbReference type="PaxDb" id="9823-ENSSSCP00000003150"/>
<dbReference type="PeptideAtlas" id="P60899"/>
<dbReference type="Ensembl" id="ENSSSCT00000044156.3">
    <property type="protein sequence ID" value="ENSSSCP00000042610.1"/>
    <property type="gene ID" value="ENSSSCG00000039196.3"/>
</dbReference>
<dbReference type="Ensembl" id="ENSSSCT00015041231.1">
    <property type="protein sequence ID" value="ENSSSCP00015016293.1"/>
    <property type="gene ID" value="ENSSSCG00015031055.1"/>
</dbReference>
<dbReference type="Ensembl" id="ENSSSCT00025083952.1">
    <property type="protein sequence ID" value="ENSSSCP00025036523.1"/>
    <property type="gene ID" value="ENSSSCG00025061303.1"/>
</dbReference>
<dbReference type="Ensembl" id="ENSSSCT00030034726.1">
    <property type="protein sequence ID" value="ENSSSCP00030015850.1"/>
    <property type="gene ID" value="ENSSSCG00030024862.1"/>
</dbReference>
<dbReference type="Ensembl" id="ENSSSCT00035043945.1">
    <property type="protein sequence ID" value="ENSSSCP00035017595.1"/>
    <property type="gene ID" value="ENSSSCG00035033168.1"/>
</dbReference>
<dbReference type="Ensembl" id="ENSSSCT00040102913.1">
    <property type="protein sequence ID" value="ENSSSCP00040046544.1"/>
    <property type="gene ID" value="ENSSSCG00040074424.1"/>
</dbReference>
<dbReference type="Ensembl" id="ENSSSCT00045040762.1">
    <property type="protein sequence ID" value="ENSSSCP00045028342.1"/>
    <property type="gene ID" value="ENSSSCG00045023824.1"/>
</dbReference>
<dbReference type="Ensembl" id="ENSSSCT00050031615.1">
    <property type="protein sequence ID" value="ENSSSCP00050013209.1"/>
    <property type="gene ID" value="ENSSSCG00050023426.1"/>
</dbReference>
<dbReference type="Ensembl" id="ENSSSCT00055046226.1">
    <property type="protein sequence ID" value="ENSSSCP00055036861.1"/>
    <property type="gene ID" value="ENSSSCG00055023461.1"/>
</dbReference>
<dbReference type="Ensembl" id="ENSSSCT00060093581.1">
    <property type="protein sequence ID" value="ENSSSCP00060040479.1"/>
    <property type="gene ID" value="ENSSSCG00060068558.1"/>
</dbReference>
<dbReference type="Ensembl" id="ENSSSCT00065095075.1">
    <property type="protein sequence ID" value="ENSSSCP00065041582.1"/>
    <property type="gene ID" value="ENSSSCG00065069254.1"/>
</dbReference>
<dbReference type="Ensembl" id="ENSSSCT00070016472.1">
    <property type="protein sequence ID" value="ENSSSCP00070013643.1"/>
    <property type="gene ID" value="ENSSSCG00070008520.1"/>
</dbReference>
<dbReference type="Ensembl" id="ENSSSCT00115024070">
    <property type="protein sequence ID" value="ENSSSCP00115022817"/>
    <property type="gene ID" value="ENSSSCG00115013869"/>
</dbReference>
<dbReference type="GeneID" id="414403"/>
<dbReference type="KEGG" id="ssc:414403"/>
<dbReference type="CTD" id="5438"/>
<dbReference type="VGNC" id="VGNC:91653">
    <property type="gene designation" value="POLR2I"/>
</dbReference>
<dbReference type="eggNOG" id="KOG2691">
    <property type="taxonomic scope" value="Eukaryota"/>
</dbReference>
<dbReference type="GeneTree" id="ENSGT00550000075063"/>
<dbReference type="HOGENOM" id="CLU_093932_0_1_1"/>
<dbReference type="InParanoid" id="P60899"/>
<dbReference type="OMA" id="DTSMVLF"/>
<dbReference type="OrthoDB" id="282270at2759"/>
<dbReference type="TreeFam" id="TF103032"/>
<dbReference type="Reactome" id="R-SSC-112382">
    <property type="pathway name" value="Formation of RNA Pol II elongation complex"/>
</dbReference>
<dbReference type="Reactome" id="R-SSC-113418">
    <property type="pathway name" value="Formation of the Early Elongation Complex"/>
</dbReference>
<dbReference type="Reactome" id="R-SSC-5578749">
    <property type="pathway name" value="Transcriptional regulation by small RNAs"/>
</dbReference>
<dbReference type="Reactome" id="R-SSC-674695">
    <property type="pathway name" value="RNA Polymerase II Pre-transcription Events"/>
</dbReference>
<dbReference type="Reactome" id="R-SSC-6781823">
    <property type="pathway name" value="Formation of TC-NER Pre-Incision Complex"/>
</dbReference>
<dbReference type="Reactome" id="R-SSC-6782135">
    <property type="pathway name" value="Dual incision in TC-NER"/>
</dbReference>
<dbReference type="Reactome" id="R-SSC-6782210">
    <property type="pathway name" value="Gap-filling DNA repair synthesis and ligation in TC-NER"/>
</dbReference>
<dbReference type="Reactome" id="R-SSC-6796648">
    <property type="pathway name" value="TP53 Regulates Transcription of DNA Repair Genes"/>
</dbReference>
<dbReference type="Reactome" id="R-SSC-6803529">
    <property type="pathway name" value="FGFR2 alternative splicing"/>
</dbReference>
<dbReference type="Reactome" id="R-SSC-6807505">
    <property type="pathway name" value="RNA polymerase II transcribes snRNA genes"/>
</dbReference>
<dbReference type="Reactome" id="R-SSC-72086">
    <property type="pathway name" value="mRNA Capping"/>
</dbReference>
<dbReference type="Reactome" id="R-SSC-72163">
    <property type="pathway name" value="mRNA Splicing - Major Pathway"/>
</dbReference>
<dbReference type="Reactome" id="R-SSC-72165">
    <property type="pathway name" value="mRNA Splicing - Minor Pathway"/>
</dbReference>
<dbReference type="Reactome" id="R-SSC-72203">
    <property type="pathway name" value="Processing of Capped Intron-Containing Pre-mRNA"/>
</dbReference>
<dbReference type="Reactome" id="R-SSC-73776">
    <property type="pathway name" value="RNA Polymerase II Promoter Escape"/>
</dbReference>
<dbReference type="Reactome" id="R-SSC-73779">
    <property type="pathway name" value="RNA Polymerase II Transcription Pre-Initiation And Promoter Opening"/>
</dbReference>
<dbReference type="Reactome" id="R-SSC-75953">
    <property type="pathway name" value="RNA Polymerase II Transcription Initiation"/>
</dbReference>
<dbReference type="Reactome" id="R-SSC-75955">
    <property type="pathway name" value="RNA Polymerase II Transcription Elongation"/>
</dbReference>
<dbReference type="Reactome" id="R-SSC-76042">
    <property type="pathway name" value="RNA Polymerase II Transcription Initiation And Promoter Clearance"/>
</dbReference>
<dbReference type="Reactome" id="R-SSC-77075">
    <property type="pathway name" value="RNA Pol II CTD phosphorylation and interaction with CE"/>
</dbReference>
<dbReference type="Reactome" id="R-SSC-9018519">
    <property type="pathway name" value="Estrogen-dependent gene expression"/>
</dbReference>
<dbReference type="Proteomes" id="UP000008227">
    <property type="component" value="Chromosome 6"/>
</dbReference>
<dbReference type="Proteomes" id="UP000314985">
    <property type="component" value="Chromosome 6"/>
</dbReference>
<dbReference type="Proteomes" id="UP000694570">
    <property type="component" value="Unplaced"/>
</dbReference>
<dbReference type="Proteomes" id="UP000694571">
    <property type="component" value="Unplaced"/>
</dbReference>
<dbReference type="Proteomes" id="UP000694720">
    <property type="component" value="Unplaced"/>
</dbReference>
<dbReference type="Proteomes" id="UP000694722">
    <property type="component" value="Unplaced"/>
</dbReference>
<dbReference type="Proteomes" id="UP000694723">
    <property type="component" value="Unplaced"/>
</dbReference>
<dbReference type="Proteomes" id="UP000694724">
    <property type="component" value="Unplaced"/>
</dbReference>
<dbReference type="Proteomes" id="UP000694725">
    <property type="component" value="Unplaced"/>
</dbReference>
<dbReference type="Proteomes" id="UP000694726">
    <property type="component" value="Unplaced"/>
</dbReference>
<dbReference type="Proteomes" id="UP000694727">
    <property type="component" value="Unplaced"/>
</dbReference>
<dbReference type="Proteomes" id="UP000694728">
    <property type="component" value="Unplaced"/>
</dbReference>
<dbReference type="Bgee" id="ENSSSCG00000039196">
    <property type="expression patterns" value="Expressed in longissimus lumborum muscle and 43 other cell types or tissues"/>
</dbReference>
<dbReference type="ExpressionAtlas" id="P60899">
    <property type="expression patterns" value="baseline and differential"/>
</dbReference>
<dbReference type="GO" id="GO:0005730">
    <property type="term" value="C:nucleolus"/>
    <property type="evidence" value="ECO:0007669"/>
    <property type="project" value="UniProtKB-SubCell"/>
</dbReference>
<dbReference type="GO" id="GO:0005634">
    <property type="term" value="C:nucleus"/>
    <property type="evidence" value="ECO:0000250"/>
    <property type="project" value="UniProtKB"/>
</dbReference>
<dbReference type="GO" id="GO:0005665">
    <property type="term" value="C:RNA polymerase II, core complex"/>
    <property type="evidence" value="ECO:0000250"/>
    <property type="project" value="UniProtKB"/>
</dbReference>
<dbReference type="GO" id="GO:0003899">
    <property type="term" value="F:DNA-directed RNA polymerase activity"/>
    <property type="evidence" value="ECO:0007669"/>
    <property type="project" value="InterPro"/>
</dbReference>
<dbReference type="GO" id="GO:0003676">
    <property type="term" value="F:nucleic acid binding"/>
    <property type="evidence" value="ECO:0007669"/>
    <property type="project" value="InterPro"/>
</dbReference>
<dbReference type="GO" id="GO:0008270">
    <property type="term" value="F:zinc ion binding"/>
    <property type="evidence" value="ECO:0007669"/>
    <property type="project" value="UniProtKB-KW"/>
</dbReference>
<dbReference type="GO" id="GO:0001193">
    <property type="term" value="P:maintenance of transcriptional fidelity during transcription elongation by RNA polymerase II"/>
    <property type="evidence" value="ECO:0000318"/>
    <property type="project" value="GO_Central"/>
</dbReference>
<dbReference type="GO" id="GO:0006366">
    <property type="term" value="P:transcription by RNA polymerase II"/>
    <property type="evidence" value="ECO:0000250"/>
    <property type="project" value="UniProtKB"/>
</dbReference>
<dbReference type="GO" id="GO:0006367">
    <property type="term" value="P:transcription initiation at RNA polymerase II promoter"/>
    <property type="evidence" value="ECO:0000318"/>
    <property type="project" value="GO_Central"/>
</dbReference>
<dbReference type="GO" id="GO:0006283">
    <property type="term" value="P:transcription-coupled nucleotide-excision repair"/>
    <property type="evidence" value="ECO:0000318"/>
    <property type="project" value="GO_Central"/>
</dbReference>
<dbReference type="CDD" id="cd10508">
    <property type="entry name" value="Zn-ribbon_RPB9"/>
    <property type="match status" value="1"/>
</dbReference>
<dbReference type="FunFam" id="2.20.25.10:FF:000004">
    <property type="entry name" value="DNA-directed RNA polymerase subunit"/>
    <property type="match status" value="1"/>
</dbReference>
<dbReference type="FunFam" id="2.20.25.10:FF:000009">
    <property type="entry name" value="DNA-directed RNA polymerase subunit"/>
    <property type="match status" value="1"/>
</dbReference>
<dbReference type="Gene3D" id="2.20.25.10">
    <property type="match status" value="2"/>
</dbReference>
<dbReference type="InterPro" id="IPR019761">
    <property type="entry name" value="DNA-dir_RNA_pol-M_15_CS"/>
</dbReference>
<dbReference type="InterPro" id="IPR012164">
    <property type="entry name" value="Rpa12/Rpb9/Rpc10/TFS"/>
</dbReference>
<dbReference type="InterPro" id="IPR001529">
    <property type="entry name" value="Zn_ribbon_RPB9"/>
</dbReference>
<dbReference type="InterPro" id="IPR034012">
    <property type="entry name" value="Zn_ribbon_RPB9_C"/>
</dbReference>
<dbReference type="InterPro" id="IPR001222">
    <property type="entry name" value="Znf_TFIIS"/>
</dbReference>
<dbReference type="PANTHER" id="PTHR11239">
    <property type="entry name" value="DNA-DIRECTED RNA POLYMERASE"/>
    <property type="match status" value="1"/>
</dbReference>
<dbReference type="PANTHER" id="PTHR11239:SF1">
    <property type="entry name" value="DNA-DIRECTED RNA POLYMERASE II SUBUNIT RPB9"/>
    <property type="match status" value="1"/>
</dbReference>
<dbReference type="Pfam" id="PF02150">
    <property type="entry name" value="Zn_ribbon_RPB9"/>
    <property type="match status" value="1"/>
</dbReference>
<dbReference type="Pfam" id="PF01096">
    <property type="entry name" value="Zn_ribbon_TFIIS"/>
    <property type="match status" value="1"/>
</dbReference>
<dbReference type="PIRSF" id="PIRSF005586">
    <property type="entry name" value="RNApol_RpoM"/>
    <property type="match status" value="1"/>
</dbReference>
<dbReference type="SMART" id="SM00661">
    <property type="entry name" value="RPOL9"/>
    <property type="match status" value="1"/>
</dbReference>
<dbReference type="SMART" id="SM00440">
    <property type="entry name" value="ZnF_C2C2"/>
    <property type="match status" value="1"/>
</dbReference>
<dbReference type="SUPFAM" id="SSF57783">
    <property type="entry name" value="Zinc beta-ribbon"/>
    <property type="match status" value="2"/>
</dbReference>
<dbReference type="PROSITE" id="PS01030">
    <property type="entry name" value="RNA_POL_M_15KD"/>
    <property type="match status" value="1"/>
</dbReference>
<dbReference type="PROSITE" id="PS00466">
    <property type="entry name" value="ZF_TFIIS_1"/>
    <property type="match status" value="1"/>
</dbReference>
<dbReference type="PROSITE" id="PS51133">
    <property type="entry name" value="ZF_TFIIS_2"/>
    <property type="match status" value="1"/>
</dbReference>
<name>RPB9_PIG</name>
<gene>
    <name type="primary">POLR2I</name>
</gene>
<protein>
    <recommendedName>
        <fullName>DNA-directed RNA polymerase II subunit RPB9</fullName>
        <shortName>RNA polymerase II subunit B9</shortName>
    </recommendedName>
    <alternativeName>
        <fullName>DNA-directed RNA polymerase II subunit I</fullName>
    </alternativeName>
    <alternativeName>
        <fullName>RNA polymerase II 14.5 kDa subunit</fullName>
        <shortName>RPB14.5</shortName>
    </alternativeName>
</protein>
<evidence type="ECO:0000250" key="1"/>
<evidence type="ECO:0000250" key="2">
    <source>
        <dbReference type="UniProtKB" id="P32529"/>
    </source>
</evidence>
<evidence type="ECO:0000250" key="3">
    <source>
        <dbReference type="UniProtKB" id="P36954"/>
    </source>
</evidence>
<evidence type="ECO:0000255" key="4"/>
<evidence type="ECO:0000255" key="5">
    <source>
        <dbReference type="PROSITE-ProRule" id="PRU00472"/>
    </source>
</evidence>
<evidence type="ECO:0000255" key="6">
    <source>
        <dbReference type="PROSITE-ProRule" id="PRU10145"/>
    </source>
</evidence>
<evidence type="ECO:0000305" key="7"/>
<evidence type="ECO:0007829" key="8">
    <source>
        <dbReference type="PDB" id="7NVU"/>
    </source>
</evidence>
<evidence type="ECO:0007829" key="9">
    <source>
        <dbReference type="PDB" id="8B3D"/>
    </source>
</evidence>
<evidence type="ECO:0007829" key="10">
    <source>
        <dbReference type="PDB" id="8UIS"/>
    </source>
</evidence>
<evidence type="ECO:0007829" key="11">
    <source>
        <dbReference type="PDB" id="9BZ0"/>
    </source>
</evidence>